<proteinExistence type="evidence at protein level"/>
<gene>
    <name evidence="6" type="primary">YKT62</name>
    <name evidence="8" type="ordered locus">At5g58180</name>
    <name evidence="9" type="ORF">MCK7.5</name>
</gene>
<protein>
    <recommendedName>
        <fullName evidence="6">VAMP-like protein YKT62</fullName>
        <shortName evidence="6">AtYKT62</shortName>
    </recommendedName>
    <alternativeName>
        <fullName>ATGP1-like protein</fullName>
    </alternativeName>
</protein>
<evidence type="ECO:0000250" key="1">
    <source>
        <dbReference type="UniProtKB" id="O15498"/>
    </source>
</evidence>
<evidence type="ECO:0000255" key="2">
    <source>
        <dbReference type="PROSITE-ProRule" id="PRU00231"/>
    </source>
</evidence>
<evidence type="ECO:0000255" key="3">
    <source>
        <dbReference type="PROSITE-ProRule" id="PRU00290"/>
    </source>
</evidence>
<evidence type="ECO:0000269" key="4">
    <source>
    </source>
</evidence>
<evidence type="ECO:0000269" key="5">
    <source>
    </source>
</evidence>
<evidence type="ECO:0000303" key="6">
    <source>
    </source>
</evidence>
<evidence type="ECO:0000305" key="7"/>
<evidence type="ECO:0000312" key="8">
    <source>
        <dbReference type="Araport" id="AT5G58180"/>
    </source>
</evidence>
<evidence type="ECO:0000312" key="9">
    <source>
        <dbReference type="EMBL" id="BAA96909.1"/>
    </source>
</evidence>
<dbReference type="EMBL" id="AB019228">
    <property type="protein sequence ID" value="BAA96909.1"/>
    <property type="molecule type" value="Genomic_DNA"/>
</dbReference>
<dbReference type="EMBL" id="CP002688">
    <property type="protein sequence ID" value="AED97008.1"/>
    <property type="molecule type" value="Genomic_DNA"/>
</dbReference>
<dbReference type="EMBL" id="CP002688">
    <property type="protein sequence ID" value="AED97009.1"/>
    <property type="molecule type" value="Genomic_DNA"/>
</dbReference>
<dbReference type="RefSeq" id="NP_001318826.1">
    <property type="nucleotide sequence ID" value="NM_001345292.1"/>
</dbReference>
<dbReference type="RefSeq" id="NP_200626.1">
    <property type="nucleotide sequence ID" value="NM_125203.2"/>
</dbReference>
<dbReference type="SMR" id="Q9LVM9"/>
<dbReference type="BioGRID" id="21174">
    <property type="interactions" value="1"/>
</dbReference>
<dbReference type="FunCoup" id="Q9LVM9">
    <property type="interactions" value="4068"/>
</dbReference>
<dbReference type="STRING" id="3702.Q9LVM9"/>
<dbReference type="PaxDb" id="3702-AT5G58180.1"/>
<dbReference type="ProteomicsDB" id="242939"/>
<dbReference type="EnsemblPlants" id="AT5G58180.1">
    <property type="protein sequence ID" value="AT5G58180.1"/>
    <property type="gene ID" value="AT5G58180"/>
</dbReference>
<dbReference type="EnsemblPlants" id="AT5G58180.2">
    <property type="protein sequence ID" value="AT5G58180.2"/>
    <property type="gene ID" value="AT5G58180"/>
</dbReference>
<dbReference type="GeneID" id="835930"/>
<dbReference type="Gramene" id="AT5G58180.1">
    <property type="protein sequence ID" value="AT5G58180.1"/>
    <property type="gene ID" value="AT5G58180"/>
</dbReference>
<dbReference type="Gramene" id="AT5G58180.2">
    <property type="protein sequence ID" value="AT5G58180.2"/>
    <property type="gene ID" value="AT5G58180"/>
</dbReference>
<dbReference type="KEGG" id="ath:AT5G58180"/>
<dbReference type="Araport" id="AT5G58180"/>
<dbReference type="TAIR" id="AT5G58180">
    <property type="gene designation" value="ATYKT62"/>
</dbReference>
<dbReference type="eggNOG" id="KOG0861">
    <property type="taxonomic scope" value="Eukaryota"/>
</dbReference>
<dbReference type="HOGENOM" id="CLU_074848_2_0_1"/>
<dbReference type="InParanoid" id="Q9LVM9"/>
<dbReference type="OMA" id="HAYNINP"/>
<dbReference type="OrthoDB" id="27923at2759"/>
<dbReference type="PhylomeDB" id="Q9LVM9"/>
<dbReference type="PRO" id="PR:Q9LVM9"/>
<dbReference type="Proteomes" id="UP000006548">
    <property type="component" value="Chromosome 5"/>
</dbReference>
<dbReference type="ExpressionAtlas" id="Q9LVM9">
    <property type="expression patterns" value="baseline and differential"/>
</dbReference>
<dbReference type="GO" id="GO:0005886">
    <property type="term" value="C:plasma membrane"/>
    <property type="evidence" value="ECO:0007669"/>
    <property type="project" value="UniProtKB-SubCell"/>
</dbReference>
<dbReference type="GO" id="GO:0031201">
    <property type="term" value="C:SNARE complex"/>
    <property type="evidence" value="ECO:0000314"/>
    <property type="project" value="UniProtKB"/>
</dbReference>
<dbReference type="GO" id="GO:0015031">
    <property type="term" value="P:protein transport"/>
    <property type="evidence" value="ECO:0007669"/>
    <property type="project" value="UniProtKB-KW"/>
</dbReference>
<dbReference type="GO" id="GO:0006906">
    <property type="term" value="P:vesicle fusion"/>
    <property type="evidence" value="ECO:0000314"/>
    <property type="project" value="UniProtKB"/>
</dbReference>
<dbReference type="CDD" id="cd14824">
    <property type="entry name" value="Longin"/>
    <property type="match status" value="1"/>
</dbReference>
<dbReference type="CDD" id="cd15867">
    <property type="entry name" value="R-SNARE_YKT6"/>
    <property type="match status" value="1"/>
</dbReference>
<dbReference type="FunFam" id="1.20.5.110:FF:000020">
    <property type="entry name" value="synaptobrevin homolog YKT6"/>
    <property type="match status" value="1"/>
</dbReference>
<dbReference type="Gene3D" id="1.20.5.110">
    <property type="match status" value="1"/>
</dbReference>
<dbReference type="Gene3D" id="3.30.450.50">
    <property type="entry name" value="Longin domain"/>
    <property type="match status" value="1"/>
</dbReference>
<dbReference type="InterPro" id="IPR011012">
    <property type="entry name" value="Longin-like_dom_sf"/>
</dbReference>
<dbReference type="InterPro" id="IPR010908">
    <property type="entry name" value="Longin_dom"/>
</dbReference>
<dbReference type="InterPro" id="IPR045848">
    <property type="entry name" value="R-SNARE_YKT6"/>
</dbReference>
<dbReference type="InterPro" id="IPR001388">
    <property type="entry name" value="Synaptobrevin-like"/>
</dbReference>
<dbReference type="InterPro" id="IPR042855">
    <property type="entry name" value="V_SNARE_CC"/>
</dbReference>
<dbReference type="PANTHER" id="PTHR45806">
    <property type="entry name" value="SYNAPTOBREVIN HOMOLOG YKT6"/>
    <property type="match status" value="1"/>
</dbReference>
<dbReference type="PANTHER" id="PTHR45806:SF1">
    <property type="entry name" value="SYNAPTOBREVIN HOMOLOG YKT6"/>
    <property type="match status" value="1"/>
</dbReference>
<dbReference type="Pfam" id="PF13774">
    <property type="entry name" value="Longin"/>
    <property type="match status" value="1"/>
</dbReference>
<dbReference type="Pfam" id="PF00957">
    <property type="entry name" value="Synaptobrevin"/>
    <property type="match status" value="1"/>
</dbReference>
<dbReference type="SMART" id="SM01270">
    <property type="entry name" value="Longin"/>
    <property type="match status" value="1"/>
</dbReference>
<dbReference type="SUPFAM" id="SSF58038">
    <property type="entry name" value="SNARE fusion complex"/>
    <property type="match status" value="1"/>
</dbReference>
<dbReference type="SUPFAM" id="SSF64356">
    <property type="entry name" value="SNARE-like"/>
    <property type="match status" value="1"/>
</dbReference>
<dbReference type="PROSITE" id="PS50859">
    <property type="entry name" value="LONGIN"/>
    <property type="match status" value="1"/>
</dbReference>
<dbReference type="PROSITE" id="PS00417">
    <property type="entry name" value="SYNAPTOBREVIN"/>
    <property type="match status" value="1"/>
</dbReference>
<dbReference type="PROSITE" id="PS50892">
    <property type="entry name" value="V_SNARE"/>
    <property type="match status" value="1"/>
</dbReference>
<reference key="1">
    <citation type="journal article" date="2000" name="DNA Res.">
        <title>Structural analysis of Arabidopsis thaliana chromosome 5. X. Sequence features of the regions of 3,076,755 bp covered by sixty P1 and TAC clones.</title>
        <authorList>
            <person name="Sato S."/>
            <person name="Nakamura Y."/>
            <person name="Kaneko T."/>
            <person name="Katoh T."/>
            <person name="Asamizu E."/>
            <person name="Kotani H."/>
            <person name="Tabata S."/>
        </authorList>
    </citation>
    <scope>NUCLEOTIDE SEQUENCE [LARGE SCALE GENOMIC DNA]</scope>
    <source>
        <strain>cv. Columbia</strain>
    </source>
</reference>
<reference key="2">
    <citation type="journal article" date="2017" name="Plant J.">
        <title>Araport11: a complete reannotation of the Arabidopsis thaliana reference genome.</title>
        <authorList>
            <person name="Cheng C.Y."/>
            <person name="Krishnakumar V."/>
            <person name="Chan A.P."/>
            <person name="Thibaud-Nissen F."/>
            <person name="Schobel S."/>
            <person name="Town C.D."/>
        </authorList>
    </citation>
    <scope>GENOME REANNOTATION</scope>
    <source>
        <strain>cv. Columbia</strain>
    </source>
</reference>
<reference key="3">
    <citation type="journal article" date="2005" name="J. Mol. Biol.">
        <title>YKT6 is a core constituent of membrane fusion machineries at the Arabidopsis trans-Golgi network.</title>
        <authorList>
            <person name="Chen Y."/>
            <person name="Shin Y.-K."/>
            <person name="Bassham D.C."/>
        </authorList>
    </citation>
    <scope>FUNCTION</scope>
    <scope>INTERACTION WITH SYP41</scope>
    <scope>SUBUNIT</scope>
</reference>
<reference key="4">
    <citation type="journal article" date="2013" name="BMC Biochem.">
        <title>Functional redundancy between trans-Golgi network SNARE family members in Arabidopsis thaliana.</title>
        <authorList>
            <person name="Kim S.-J."/>
            <person name="Bassham D.C."/>
        </authorList>
    </citation>
    <scope>FUNCTION</scope>
</reference>
<name>YKT62_ARATH</name>
<feature type="chain" id="PRO_0000206749" description="VAMP-like protein YKT62">
    <location>
        <begin position="1"/>
        <end position="196"/>
    </location>
</feature>
<feature type="propeptide" id="PRO_0000370847" description="Removed in mature form" evidence="1">
    <location>
        <begin position="197"/>
        <end position="199"/>
    </location>
</feature>
<feature type="domain" description="Longin" evidence="2">
    <location>
        <begin position="7"/>
        <end position="131"/>
    </location>
</feature>
<feature type="domain" description="v-SNARE coiled-coil homology" evidence="3">
    <location>
        <begin position="139"/>
        <end position="199"/>
    </location>
</feature>
<feature type="modified residue" description="Cysteine methyl ester" evidence="1">
    <location>
        <position position="196"/>
    </location>
</feature>
<feature type="lipid moiety-binding region" description="S-palmitoyl cysteine" evidence="1">
    <location>
        <position position="195"/>
    </location>
</feature>
<feature type="lipid moiety-binding region" description="S-geranylgeranyl cysteine" evidence="1">
    <location>
        <position position="196"/>
    </location>
</feature>
<organism>
    <name type="scientific">Arabidopsis thaliana</name>
    <name type="common">Mouse-ear cress</name>
    <dbReference type="NCBI Taxonomy" id="3702"/>
    <lineage>
        <taxon>Eukaryota</taxon>
        <taxon>Viridiplantae</taxon>
        <taxon>Streptophyta</taxon>
        <taxon>Embryophyta</taxon>
        <taxon>Tracheophyta</taxon>
        <taxon>Spermatophyta</taxon>
        <taxon>Magnoliopsida</taxon>
        <taxon>eudicotyledons</taxon>
        <taxon>Gunneridae</taxon>
        <taxon>Pentapetalae</taxon>
        <taxon>rosids</taxon>
        <taxon>malvids</taxon>
        <taxon>Brassicales</taxon>
        <taxon>Brassicaceae</taxon>
        <taxon>Camelineae</taxon>
        <taxon>Arabidopsis</taxon>
    </lineage>
</organism>
<accession>Q9LVM9</accession>
<comment type="function">
    <text evidence="4 5">Involved in the secretory pathway (PubMed:15919093). Essential for membrane fusion mediated by either SYP41 or SYP61; triggers the fusion of phospholipid vesicles containing SYP41 or SYP61 and VTI12 (PubMed:15919093, PubMed:24021022).</text>
</comment>
<comment type="subunit">
    <text evidence="4">Interacts with SYP41 (PubMed:15919093). Core constituent of the SNARE complex required for membrane fusion at the trans-Golgi network (PubMed:15919093).</text>
</comment>
<comment type="subcellular location">
    <subcellularLocation>
        <location evidence="7">Cell membrane</location>
        <topology evidence="7">Lipid-anchor</topology>
        <orientation evidence="7">Cytoplasmic side</orientation>
    </subcellularLocation>
</comment>
<comment type="similarity">
    <text evidence="7">Belongs to the synaptobrevin family.</text>
</comment>
<keyword id="KW-1003">Cell membrane</keyword>
<keyword id="KW-0449">Lipoprotein</keyword>
<keyword id="KW-0472">Membrane</keyword>
<keyword id="KW-0488">Methylation</keyword>
<keyword id="KW-0564">Palmitate</keyword>
<keyword id="KW-0636">Prenylation</keyword>
<keyword id="KW-0653">Protein transport</keyword>
<keyword id="KW-1185">Reference proteome</keyword>
<keyword id="KW-0813">Transport</keyword>
<sequence>MKITALLVLKCDPETREPVILANVSDLSQFGKFSFYRSNFEEFIVFIARTVARRTPPGQRQSVKHEEYKVHAYNINGLCAVGFMDDHYPVRSAFSLLNQVLDVYQKDYGDTWRFENSSQPWPYLKEASDKFRDPAEADKLLKIQRELDETKIILHKTIDGVLARGEKLDSLVEKSSELSLASKMFYKQAKKTNSCCTLL</sequence>